<protein>
    <recommendedName>
        <fullName>Protein TabA</fullName>
    </recommendedName>
</protein>
<organism>
    <name type="scientific">Pseudomonas amygdali pv. tabaci</name>
    <name type="common">Pseudomonas syringae pv. tabaci</name>
    <dbReference type="NCBI Taxonomy" id="322"/>
    <lineage>
        <taxon>Bacteria</taxon>
        <taxon>Pseudomonadati</taxon>
        <taxon>Pseudomonadota</taxon>
        <taxon>Gammaproteobacteria</taxon>
        <taxon>Pseudomonadales</taxon>
        <taxon>Pseudomonadaceae</taxon>
        <taxon>Pseudomonas</taxon>
        <taxon>Pseudomonas amygdali</taxon>
    </lineage>
</organism>
<dbReference type="EMBL" id="M88485">
    <property type="protein sequence ID" value="AAB41802.1"/>
    <property type="molecule type" value="Genomic_DNA"/>
</dbReference>
<dbReference type="PIR" id="S27649">
    <property type="entry name" value="S27649"/>
</dbReference>
<dbReference type="RefSeq" id="WP_005771899.1">
    <property type="nucleotide sequence ID" value="NZ_QPDY01000007.1"/>
</dbReference>
<dbReference type="SMR" id="P31851"/>
<dbReference type="KEGG" id="ag:AAB41802"/>
<dbReference type="GO" id="GO:0008836">
    <property type="term" value="F:diaminopimelate decarboxylase activity"/>
    <property type="evidence" value="ECO:0007669"/>
    <property type="project" value="InterPro"/>
</dbReference>
<dbReference type="GO" id="GO:0009089">
    <property type="term" value="P:lysine biosynthetic process via diaminopimelate"/>
    <property type="evidence" value="ECO:0007669"/>
    <property type="project" value="InterPro"/>
</dbReference>
<dbReference type="CDD" id="cd06828">
    <property type="entry name" value="PLPDE_III_DapDC"/>
    <property type="match status" value="1"/>
</dbReference>
<dbReference type="FunFam" id="3.20.20.10:FF:000003">
    <property type="entry name" value="Diaminopimelate decarboxylase"/>
    <property type="match status" value="1"/>
</dbReference>
<dbReference type="Gene3D" id="3.20.20.10">
    <property type="entry name" value="Alanine racemase"/>
    <property type="match status" value="1"/>
</dbReference>
<dbReference type="Gene3D" id="2.40.37.10">
    <property type="entry name" value="Lyase, Ornithine Decarboxylase, Chain A, domain 1"/>
    <property type="match status" value="1"/>
</dbReference>
<dbReference type="InterPro" id="IPR009006">
    <property type="entry name" value="Ala_racemase/Decarboxylase_C"/>
</dbReference>
<dbReference type="InterPro" id="IPR002986">
    <property type="entry name" value="DAP_deCOOHase_LysA"/>
</dbReference>
<dbReference type="InterPro" id="IPR022643">
    <property type="entry name" value="De-COase2_C"/>
</dbReference>
<dbReference type="InterPro" id="IPR022657">
    <property type="entry name" value="De-COase2_CS"/>
</dbReference>
<dbReference type="InterPro" id="IPR022644">
    <property type="entry name" value="De-COase2_N"/>
</dbReference>
<dbReference type="InterPro" id="IPR022653">
    <property type="entry name" value="De-COase2_pyr-phos_BS"/>
</dbReference>
<dbReference type="InterPro" id="IPR000183">
    <property type="entry name" value="Orn/DAP/Arg_de-COase"/>
</dbReference>
<dbReference type="InterPro" id="IPR029066">
    <property type="entry name" value="PLP-binding_barrel"/>
</dbReference>
<dbReference type="PANTHER" id="PTHR43727">
    <property type="entry name" value="DIAMINOPIMELATE DECARBOXYLASE"/>
    <property type="match status" value="1"/>
</dbReference>
<dbReference type="PANTHER" id="PTHR43727:SF2">
    <property type="entry name" value="GROUP IV DECARBOXYLASE"/>
    <property type="match status" value="1"/>
</dbReference>
<dbReference type="Pfam" id="PF02784">
    <property type="entry name" value="Orn_Arg_deC_N"/>
    <property type="match status" value="1"/>
</dbReference>
<dbReference type="Pfam" id="PF00278">
    <property type="entry name" value="Orn_DAP_Arg_deC"/>
    <property type="match status" value="1"/>
</dbReference>
<dbReference type="PRINTS" id="PR01181">
    <property type="entry name" value="DAPDCRBXLASE"/>
</dbReference>
<dbReference type="PRINTS" id="PR01179">
    <property type="entry name" value="ODADCRBXLASE"/>
</dbReference>
<dbReference type="SUPFAM" id="SSF50621">
    <property type="entry name" value="Alanine racemase C-terminal domain-like"/>
    <property type="match status" value="1"/>
</dbReference>
<dbReference type="SUPFAM" id="SSF51419">
    <property type="entry name" value="PLP-binding barrel"/>
    <property type="match status" value="1"/>
</dbReference>
<dbReference type="PROSITE" id="PS00878">
    <property type="entry name" value="ODR_DC_2_1"/>
    <property type="match status" value="1"/>
</dbReference>
<dbReference type="PROSITE" id="PS00879">
    <property type="entry name" value="ODR_DC_2_2"/>
    <property type="match status" value="1"/>
</dbReference>
<comment type="function">
    <text>Involved in tabtoxin production and pathogenicity.</text>
</comment>
<comment type="cofactor">
    <cofactor evidence="1">
        <name>pyridoxal 5'-phosphate</name>
        <dbReference type="ChEBI" id="CHEBI:597326"/>
    </cofactor>
</comment>
<comment type="similarity">
    <text evidence="2">Belongs to the Orn/Lys/Arg decarboxylase class-II family.</text>
</comment>
<proteinExistence type="inferred from homology"/>
<reference key="1">
    <citation type="journal article" date="1992" name="Mol. Plant Microbe Interact.">
        <title>Identification of a lysA-like gene required for tabtoxin biosynthesis and pathogenicity in Pseudomonas syringae pv. tabaci strain PTBR2.024.</title>
        <authorList>
            <person name="Engst K."/>
            <person name="Shaw P.D."/>
        </authorList>
    </citation>
    <scope>NUCLEOTIDE SEQUENCE [GENOMIC DNA]</scope>
    <source>
        <strain>PTBR2.024</strain>
    </source>
</reference>
<feature type="chain" id="PRO_0000149943" description="Protein TabA">
    <location>
        <begin position="1"/>
        <end position="420"/>
    </location>
</feature>
<feature type="modified residue" description="N6-(pyridoxal phosphate)lysine" evidence="1">
    <location>
        <position position="57"/>
    </location>
</feature>
<sequence length="420" mass="46137">MPISESFARRLFPLLDELTNTYPTPFHIYDERAIVQTHRNVAQAFADSAFRQYFAVKALPTPAILSLLLKEGSGLDCSSPVELMLAERLGARGDDIVFTSNNTSLSEYQMALQAGALVTFDDRSMLEQVIALPDIVAFRVSPHGVIARSSQMGNAQQSKFGIPEAELVQSYREAWDRGARRFGIHGMMCANELSLEAAVQAGVQVIEVGARVAREAGIELEYINIGGGLGIPYRIDDQALDLTAYADALKRALKQAFPHNTPKLLMELGRYISGPHGVLVSRVINRCSKGREIVGLDASMSALMRPGLYGAYHHLTLPFADQRPEGVFDVVGALCENFDKFAVDRLLPSPLIGDLALIHDTGAHGHAMGFTYNGRLRPAELMLTDDGDVVEIRRAETFDDHTGPIQWQPVDVFNPTRCVK</sequence>
<accession>P31851</accession>
<name>TABA_PSEAJ</name>
<evidence type="ECO:0000250" key="1"/>
<evidence type="ECO:0000305" key="2"/>
<keyword id="KW-0210">Decarboxylase</keyword>
<keyword id="KW-0456">Lyase</keyword>
<keyword id="KW-0663">Pyridoxal phosphate</keyword>
<gene>
    <name type="primary">tabA</name>
</gene>